<keyword id="KW-0963">Cytoplasm</keyword>
<keyword id="KW-0489">Methyltransferase</keyword>
<keyword id="KW-0949">S-adenosyl-L-methionine</keyword>
<keyword id="KW-0808">Transferase</keyword>
<evidence type="ECO:0000255" key="1">
    <source>
        <dbReference type="HAMAP-Rule" id="MF_00090"/>
    </source>
</evidence>
<reference key="1">
    <citation type="journal article" date="2009" name="Stand. Genomic Sci.">
        <title>Complete genome sequence of Methanoculleus marisnigri Romesser et al. 1981 type strain JR1.</title>
        <authorList>
            <person name="Anderson I.J."/>
            <person name="Sieprawska-Lupa M."/>
            <person name="Lapidus A."/>
            <person name="Nolan M."/>
            <person name="Copeland A."/>
            <person name="Glavina Del Rio T."/>
            <person name="Tice H."/>
            <person name="Dalin E."/>
            <person name="Barry K."/>
            <person name="Saunders E."/>
            <person name="Han C."/>
            <person name="Brettin T."/>
            <person name="Detter J.C."/>
            <person name="Bruce D."/>
            <person name="Mikhailova N."/>
            <person name="Pitluck S."/>
            <person name="Hauser L."/>
            <person name="Land M."/>
            <person name="Lucas S."/>
            <person name="Richardson P."/>
            <person name="Whitman W.B."/>
            <person name="Kyrpides N.C."/>
        </authorList>
    </citation>
    <scope>NUCLEOTIDE SEQUENCE [LARGE SCALE GENOMIC DNA]</scope>
    <source>
        <strain>ATCC 35101 / DSM 1498 / JR1</strain>
    </source>
</reference>
<feature type="chain" id="PRO_0000351969" description="Protein-L-isoaspartate O-methyltransferase">
    <location>
        <begin position="1"/>
        <end position="220"/>
    </location>
</feature>
<feature type="active site" evidence="1">
    <location>
        <position position="64"/>
    </location>
</feature>
<sequence>MEADPCRREREEMVEFQIRARGIGDERVLAAMRKIPRHLFVPKNLERVAYEDRPLPIGEGQTISQPYIVAVMTEHLEIRSHDRVLEIGTGSGYQAALLAELAAKVVSVERLPDIADRARENLARAGVTGIEVVVGDGTQGYPPEAPYDAIVVTAASPEIPQPLIDQLGKGGRLVAPVGPRECQDLVKLVKREGRVETIPLGGVCFVPLIGQFGWQGEVSP</sequence>
<protein>
    <recommendedName>
        <fullName evidence="1">Protein-L-isoaspartate O-methyltransferase</fullName>
        <ecNumber evidence="1">2.1.1.77</ecNumber>
    </recommendedName>
    <alternativeName>
        <fullName evidence="1">L-isoaspartyl protein carboxyl methyltransferase</fullName>
    </alternativeName>
    <alternativeName>
        <fullName evidence="1">Protein L-isoaspartyl methyltransferase</fullName>
    </alternativeName>
    <alternativeName>
        <fullName evidence="1">Protein-beta-aspartate methyltransferase</fullName>
        <shortName evidence="1">PIMT</shortName>
    </alternativeName>
</protein>
<accession>A3CXP8</accession>
<organism>
    <name type="scientific">Methanoculleus marisnigri (strain ATCC 35101 / DSM 1498 / JR1)</name>
    <dbReference type="NCBI Taxonomy" id="368407"/>
    <lineage>
        <taxon>Archaea</taxon>
        <taxon>Methanobacteriati</taxon>
        <taxon>Methanobacteriota</taxon>
        <taxon>Stenosarchaea group</taxon>
        <taxon>Methanomicrobia</taxon>
        <taxon>Methanomicrobiales</taxon>
        <taxon>Methanomicrobiaceae</taxon>
        <taxon>Methanoculleus</taxon>
    </lineage>
</organism>
<gene>
    <name evidence="1" type="primary">pcm</name>
    <name type="ordered locus">Memar_2225</name>
</gene>
<dbReference type="EC" id="2.1.1.77" evidence="1"/>
<dbReference type="EMBL" id="CP000562">
    <property type="protein sequence ID" value="ABN58148.1"/>
    <property type="molecule type" value="Genomic_DNA"/>
</dbReference>
<dbReference type="RefSeq" id="WP_011845057.1">
    <property type="nucleotide sequence ID" value="NC_009051.1"/>
</dbReference>
<dbReference type="SMR" id="A3CXP8"/>
<dbReference type="STRING" id="368407.Memar_2225"/>
<dbReference type="GeneID" id="4847977"/>
<dbReference type="KEGG" id="mem:Memar_2225"/>
<dbReference type="eggNOG" id="arCOG00976">
    <property type="taxonomic scope" value="Archaea"/>
</dbReference>
<dbReference type="HOGENOM" id="CLU_055432_2_0_2"/>
<dbReference type="OrthoDB" id="33618at2157"/>
<dbReference type="Proteomes" id="UP000002146">
    <property type="component" value="Chromosome"/>
</dbReference>
<dbReference type="GO" id="GO:0005737">
    <property type="term" value="C:cytoplasm"/>
    <property type="evidence" value="ECO:0007669"/>
    <property type="project" value="UniProtKB-SubCell"/>
</dbReference>
<dbReference type="GO" id="GO:0004719">
    <property type="term" value="F:protein-L-isoaspartate (D-aspartate) O-methyltransferase activity"/>
    <property type="evidence" value="ECO:0007669"/>
    <property type="project" value="UniProtKB-UniRule"/>
</dbReference>
<dbReference type="GO" id="GO:0032259">
    <property type="term" value="P:methylation"/>
    <property type="evidence" value="ECO:0007669"/>
    <property type="project" value="UniProtKB-KW"/>
</dbReference>
<dbReference type="GO" id="GO:0036211">
    <property type="term" value="P:protein modification process"/>
    <property type="evidence" value="ECO:0007669"/>
    <property type="project" value="UniProtKB-UniRule"/>
</dbReference>
<dbReference type="GO" id="GO:0030091">
    <property type="term" value="P:protein repair"/>
    <property type="evidence" value="ECO:0007669"/>
    <property type="project" value="UniProtKB-UniRule"/>
</dbReference>
<dbReference type="CDD" id="cd02440">
    <property type="entry name" value="AdoMet_MTases"/>
    <property type="match status" value="1"/>
</dbReference>
<dbReference type="FunFam" id="3.40.50.150:FF:000010">
    <property type="entry name" value="Protein-L-isoaspartate O-methyltransferase"/>
    <property type="match status" value="1"/>
</dbReference>
<dbReference type="Gene3D" id="3.40.50.150">
    <property type="entry name" value="Vaccinia Virus protein VP39"/>
    <property type="match status" value="1"/>
</dbReference>
<dbReference type="HAMAP" id="MF_00090">
    <property type="entry name" value="PIMT"/>
    <property type="match status" value="1"/>
</dbReference>
<dbReference type="InterPro" id="IPR000682">
    <property type="entry name" value="PCMT"/>
</dbReference>
<dbReference type="InterPro" id="IPR029063">
    <property type="entry name" value="SAM-dependent_MTases_sf"/>
</dbReference>
<dbReference type="NCBIfam" id="TIGR00080">
    <property type="entry name" value="pimt"/>
    <property type="match status" value="1"/>
</dbReference>
<dbReference type="NCBIfam" id="NF001453">
    <property type="entry name" value="PRK00312.1"/>
    <property type="match status" value="1"/>
</dbReference>
<dbReference type="PANTHER" id="PTHR11579">
    <property type="entry name" value="PROTEIN-L-ISOASPARTATE O-METHYLTRANSFERASE"/>
    <property type="match status" value="1"/>
</dbReference>
<dbReference type="PANTHER" id="PTHR11579:SF0">
    <property type="entry name" value="PROTEIN-L-ISOASPARTATE(D-ASPARTATE) O-METHYLTRANSFERASE"/>
    <property type="match status" value="1"/>
</dbReference>
<dbReference type="Pfam" id="PF01135">
    <property type="entry name" value="PCMT"/>
    <property type="match status" value="1"/>
</dbReference>
<dbReference type="SUPFAM" id="SSF53335">
    <property type="entry name" value="S-adenosyl-L-methionine-dependent methyltransferases"/>
    <property type="match status" value="1"/>
</dbReference>
<dbReference type="PROSITE" id="PS01279">
    <property type="entry name" value="PCMT"/>
    <property type="match status" value="1"/>
</dbReference>
<proteinExistence type="inferred from homology"/>
<comment type="function">
    <text evidence="1">Catalyzes the methyl esterification of L-isoaspartyl residues in peptides and proteins that result from spontaneous decomposition of normal L-aspartyl and L-asparaginyl residues. It plays a role in the repair and/or degradation of damaged proteins.</text>
</comment>
<comment type="catalytic activity">
    <reaction evidence="1">
        <text>[protein]-L-isoaspartate + S-adenosyl-L-methionine = [protein]-L-isoaspartate alpha-methyl ester + S-adenosyl-L-homocysteine</text>
        <dbReference type="Rhea" id="RHEA:12705"/>
        <dbReference type="Rhea" id="RHEA-COMP:12143"/>
        <dbReference type="Rhea" id="RHEA-COMP:12144"/>
        <dbReference type="ChEBI" id="CHEBI:57856"/>
        <dbReference type="ChEBI" id="CHEBI:59789"/>
        <dbReference type="ChEBI" id="CHEBI:90596"/>
        <dbReference type="ChEBI" id="CHEBI:90598"/>
        <dbReference type="EC" id="2.1.1.77"/>
    </reaction>
</comment>
<comment type="subcellular location">
    <subcellularLocation>
        <location evidence="1">Cytoplasm</location>
    </subcellularLocation>
</comment>
<comment type="similarity">
    <text evidence="1">Belongs to the methyltransferase superfamily. L-isoaspartyl/D-aspartyl protein methyltransferase family.</text>
</comment>
<name>PIMT_METMJ</name>